<name>AP4A_CAEEL</name>
<gene>
    <name type="primary">ndx-4</name>
    <name type="ORF">Y37H9A.6</name>
</gene>
<proteinExistence type="evidence at protein level"/>
<protein>
    <recommendedName>
        <fullName>Bis(5'-nucleosyl)-tetraphosphatase [asymmetrical]</fullName>
        <ecNumber>3.6.1.-</ecNumber>
    </recommendedName>
    <alternativeName>
        <fullName>Diadenosine 5',5'''-P1,P4-tetraphosphate asymmetrical hydrolase</fullName>
        <shortName>Ap4A hydrolase</shortName>
        <shortName>Ap4Aase</shortName>
        <shortName>Diadenosine tetraphosphatase</shortName>
    </alternativeName>
    <alternativeName>
        <fullName>Nudix hydrolase 4</fullName>
    </alternativeName>
</protein>
<feature type="chain" id="PRO_0000057106" description="Bis(5'-nucleosyl)-tetraphosphatase [asymmetrical]">
    <location>
        <begin position="1"/>
        <end position="138"/>
    </location>
</feature>
<feature type="domain" description="Nudix hydrolase" evidence="1">
    <location>
        <begin position="1"/>
        <end position="132"/>
    </location>
</feature>
<feature type="short sequence motif" description="Nudix box">
    <location>
        <begin position="37"/>
        <end position="58"/>
    </location>
</feature>
<feature type="mutagenesis site" description="No Effect on substrate binding or catalytic activity." evidence="4">
    <original>Y</original>
    <variation>A</variation>
    <location>
        <position position="27"/>
    </location>
</feature>
<feature type="mutagenesis site" description="Slight increase in substrate binding and no effect on catalytic activity." evidence="4">
    <original>Y</original>
    <variation>D</variation>
    <location>
        <position position="27"/>
    </location>
</feature>
<feature type="mutagenesis site" description="Increases substrate binding and reduces catalytic activity." evidence="4">
    <original>H</original>
    <variation>A</variation>
    <location>
        <position position="31"/>
    </location>
</feature>
<feature type="mutagenesis site" description="Increases substrate binding and reduces catalytic activity." evidence="4">
    <original>H</original>
    <variation>V</variation>
    <location>
        <position position="31"/>
    </location>
</feature>
<feature type="mutagenesis site" description="No effect on substrate binding and reduces catalytic activity." evidence="4">
    <original>K</original>
    <variation>M</variation>
    <location>
        <position position="36"/>
    </location>
</feature>
<feature type="mutagenesis site" description="Slight decrease in substrate binding and slight increase in catalytic activity." evidence="4">
    <original>H</original>
    <variation>G</variation>
    <location>
        <position position="38"/>
    </location>
</feature>
<feature type="mutagenesis site" description="Slight decrease in substrate binding and slight increase in catalytic activity." evidence="4">
    <original>H</original>
    <variation>K</variation>
    <location>
        <position position="38"/>
    </location>
</feature>
<feature type="mutagenesis site" description="No effect on substrate binding and strongly reduces catalytic activity." evidence="4">
    <original>E</original>
    <variation>Q</variation>
    <location>
        <position position="52"/>
    </location>
</feature>
<feature type="mutagenesis site" description="No effect on substrate binding and strongly reduces catalytic activity." evidence="4">
    <original>E</original>
    <variation>Q</variation>
    <location>
        <position position="56"/>
    </location>
</feature>
<feature type="mutagenesis site" description="Increases substrate binding and slightly reduces catalytic activity. Reduces catalytic activity; when associated with A-121." evidence="4">
    <original>Y</original>
    <variation>A</variation>
    <location>
        <position position="76"/>
    </location>
</feature>
<feature type="mutagenesis site" description="Slight increase in substrate binding and reduces catalytic activity." evidence="4">
    <original>K</original>
    <variation>M</variation>
    <location>
        <position position="79"/>
    </location>
</feature>
<feature type="mutagenesis site" description="Slight increase in substrate binding and enzyme activity." evidence="4">
    <original>K</original>
    <variation>M</variation>
    <location>
        <position position="81"/>
    </location>
</feature>
<feature type="mutagenesis site" description="Increases substrate binding and reduces catalytic activity." evidence="4">
    <original>K</original>
    <variation>M</variation>
    <location>
        <position position="83"/>
    </location>
</feature>
<feature type="mutagenesis site" description="No effect on substrate binding and reduces catalytic activity." evidence="4">
    <original>E</original>
    <variation>Q</variation>
    <location>
        <position position="103"/>
    </location>
</feature>
<feature type="mutagenesis site" description="Increases substrate binding and slightly reduces catalytic activity. Reduces catalytic activity; when associated with A-76." evidence="4">
    <original>Y</original>
    <variation>A</variation>
    <location>
        <position position="121"/>
    </location>
</feature>
<feature type="strand" evidence="6">
    <location>
        <begin position="3"/>
        <end position="14"/>
    </location>
</feature>
<feature type="strand" evidence="6">
    <location>
        <begin position="17"/>
        <end position="27"/>
    </location>
</feature>
<feature type="strand" evidence="6">
    <location>
        <begin position="32"/>
        <end position="38"/>
    </location>
</feature>
<feature type="helix" evidence="6">
    <location>
        <begin position="45"/>
        <end position="57"/>
    </location>
</feature>
<feature type="helix" evidence="6">
    <location>
        <begin position="61"/>
        <end position="63"/>
    </location>
</feature>
<feature type="strand" evidence="6">
    <location>
        <begin position="64"/>
        <end position="78"/>
    </location>
</feature>
<feature type="strand" evidence="6">
    <location>
        <begin position="81"/>
        <end position="92"/>
    </location>
</feature>
<feature type="strand" evidence="6">
    <location>
        <begin position="104"/>
        <end position="110"/>
    </location>
</feature>
<feature type="helix" evidence="6">
    <location>
        <begin position="112"/>
        <end position="119"/>
    </location>
</feature>
<feature type="helix" evidence="6">
    <location>
        <begin position="122"/>
        <end position="137"/>
    </location>
</feature>
<sequence>MVVKAAGLVIYRKLAGKIEFLLLQASYPPHHWTPPKGHVDPGEDEWQAAIRETKEEANITKEQLTIHEDCHETLFYEAKGKPKSVKYWLAKLNNPDDVQLSHEHQNWKWCELEDAIKIADYAEMGSLLRKFSAFLAGF</sequence>
<reference key="1">
    <citation type="journal article" date="2001" name="Biochim. Biophys. Acta">
        <title>Cloning, characterisation and crystallisation of a diadenosine 5',5''-P(1),P(4)-tetraphosphate pyrophosphohydrolase from Caenorhabditis elegans.</title>
        <authorList>
            <person name="Abdelghany H.M."/>
            <person name="Gasmi L."/>
            <person name="Cartwright J.L."/>
            <person name="Bailey S."/>
            <person name="Rafferty J.B."/>
            <person name="McLennan A.G."/>
        </authorList>
    </citation>
    <scope>NUCLEOTIDE SEQUENCE [GENOMIC DNA]</scope>
    <scope>X-RAY CRYSTALLOGRAPHY (2.0 ANGSTROMS)</scope>
    <scope>FUNCTION</scope>
    <scope>COFACTOR</scope>
    <source>
        <strain>Bristol N2</strain>
    </source>
</reference>
<reference key="2">
    <citation type="journal article" date="1998" name="Science">
        <title>Genome sequence of the nematode C. elegans: a platform for investigating biology.</title>
        <authorList>
            <consortium name="The C. elegans sequencing consortium"/>
        </authorList>
    </citation>
    <scope>NUCLEOTIDE SEQUENCE [LARGE SCALE GENOMIC DNA]</scope>
    <source>
        <strain>Bristol N2</strain>
    </source>
</reference>
<reference key="3">
    <citation type="journal article" date="2003" name="J. Biol. Chem.">
        <title>Analysis of the catalytic and binding residues of the diadenosine tetraphosphate pyrophosphohydrolase from Caenorhabditis elegans by site-directed mutagenesis.</title>
        <authorList>
            <person name="Abdelghany H.M."/>
            <person name="Bailey S."/>
            <person name="Blackburn G.M."/>
            <person name="Rafferty J.B."/>
            <person name="McLennan A.G."/>
        </authorList>
    </citation>
    <scope>MUTAGENESIS</scope>
    <source>
        <strain>Bristol N2</strain>
    </source>
</reference>
<reference key="4">
    <citation type="journal article" date="2002" name="Structure">
        <title>The crystal structure of diadenosine tetraphosphate hydrolase from Caenorhabditis elegans in free and binary complex forms.</title>
        <authorList>
            <person name="Bailey S."/>
            <person name="Sedelnikova S.E."/>
            <person name="Blackburn G.M."/>
            <person name="Abdelghany H.M."/>
            <person name="Baker P.J."/>
            <person name="McLennan A.G."/>
            <person name="Rafferty J.B."/>
        </authorList>
    </citation>
    <scope>X-RAY CRYSTALLOGRAPHY (1.8 ANGSTROMS)</scope>
    <scope>SUBUNIT</scope>
</reference>
<reference key="5">
    <citation type="journal article" date="2002" name="Acta Crystallogr. D">
        <title>Crystallization of a complex of Caenorhabditis elegans diadenosine tetraphosphate hydrolase and a non-hydrolysable substrate analogue, AppCH2ppA.</title>
        <authorList>
            <person name="Bailey S."/>
            <person name="Sedelnikova S.E."/>
            <person name="Blackburn G.M."/>
            <person name="Abdelghany H.M."/>
            <person name="McLennan A.G."/>
            <person name="Rafferty J.B."/>
        </authorList>
    </citation>
    <scope>X-RAY CRYSTALLOGRAPHY (2.0 ANGSTROMS)</scope>
</reference>
<evidence type="ECO:0000255" key="1">
    <source>
        <dbReference type="PROSITE-ProRule" id="PRU00794"/>
    </source>
</evidence>
<evidence type="ECO:0000269" key="2">
    <source>
    </source>
</evidence>
<evidence type="ECO:0000269" key="3">
    <source>
    </source>
</evidence>
<evidence type="ECO:0000269" key="4">
    <source>
    </source>
</evidence>
<evidence type="ECO:0000305" key="5"/>
<evidence type="ECO:0007829" key="6">
    <source>
        <dbReference type="PDB" id="1KTG"/>
    </source>
</evidence>
<keyword id="KW-0002">3D-structure</keyword>
<keyword id="KW-0067">ATP-binding</keyword>
<keyword id="KW-0106">Calcium</keyword>
<keyword id="KW-0170">Cobalt</keyword>
<keyword id="KW-0378">Hydrolase</keyword>
<keyword id="KW-0460">Magnesium</keyword>
<keyword id="KW-0464">Manganese</keyword>
<keyword id="KW-0547">Nucleotide-binding</keyword>
<keyword id="KW-1185">Reference proteome</keyword>
<keyword id="KW-0862">Zinc</keyword>
<organism>
    <name type="scientific">Caenorhabditis elegans</name>
    <dbReference type="NCBI Taxonomy" id="6239"/>
    <lineage>
        <taxon>Eukaryota</taxon>
        <taxon>Metazoa</taxon>
        <taxon>Ecdysozoa</taxon>
        <taxon>Nematoda</taxon>
        <taxon>Chromadorea</taxon>
        <taxon>Rhabditida</taxon>
        <taxon>Rhabditina</taxon>
        <taxon>Rhabditomorpha</taxon>
        <taxon>Rhabditoidea</taxon>
        <taxon>Rhabditidae</taxon>
        <taxon>Peloderinae</taxon>
        <taxon>Caenorhabditis</taxon>
    </lineage>
</organism>
<comment type="function">
    <text evidence="2">Asymmetrically hydrolyzes Ap4A to yield AMP and ATP.</text>
</comment>
<comment type="catalytic activity">
    <reaction>
        <text>P(1),P(4)-bis(5'-adenosyl) tetraphosphate + H2O = AMP + ATP + 2 H(+)</text>
        <dbReference type="Rhea" id="RHEA:32039"/>
        <dbReference type="ChEBI" id="CHEBI:15377"/>
        <dbReference type="ChEBI" id="CHEBI:15378"/>
        <dbReference type="ChEBI" id="CHEBI:30616"/>
        <dbReference type="ChEBI" id="CHEBI:58141"/>
        <dbReference type="ChEBI" id="CHEBI:456215"/>
    </reaction>
</comment>
<comment type="cofactor">
    <cofactor evidence="2">
        <name>Mg(2+)</name>
        <dbReference type="ChEBI" id="CHEBI:18420"/>
    </cofactor>
    <cofactor evidence="2">
        <name>Co(2+)</name>
        <dbReference type="ChEBI" id="CHEBI:48828"/>
    </cofactor>
    <cofactor evidence="2">
        <name>Mn(2+)</name>
        <dbReference type="ChEBI" id="CHEBI:29035"/>
    </cofactor>
    <cofactor evidence="2">
        <name>Zn(2+)</name>
        <dbReference type="ChEBI" id="CHEBI:29105"/>
    </cofactor>
    <cofactor evidence="2">
        <name>Ca(2+)</name>
        <dbReference type="ChEBI" id="CHEBI:29108"/>
    </cofactor>
    <text evidence="2">Divalent metal ions. Mg(2+), Co(2+), Mn(2+), Zn(2+) or Ca(2+).</text>
</comment>
<comment type="subunit">
    <text evidence="3">Monomer.</text>
</comment>
<comment type="domain">
    <text>Mutagenesis suggests that interactions with P1- and P4-phosphate are minimum indicating the enzyme may have a wide substrate range.</text>
</comment>
<comment type="similarity">
    <text evidence="5">Belongs to the Nudix hydrolase family.</text>
</comment>
<accession>Q9U2M7</accession>
<dbReference type="EC" id="3.6.1.-"/>
<dbReference type="EMBL" id="AL032625">
    <property type="protein sequence ID" value="CAB63351.1"/>
    <property type="molecule type" value="Genomic_DNA"/>
</dbReference>
<dbReference type="RefSeq" id="NP_493413.1">
    <property type="nucleotide sequence ID" value="NM_061012.7"/>
</dbReference>
<dbReference type="PDB" id="1KT9">
    <property type="method" value="X-ray"/>
    <property type="resolution" value="1.98 A"/>
    <property type="chains" value="A=1-138"/>
</dbReference>
<dbReference type="PDB" id="1KTG">
    <property type="method" value="X-ray"/>
    <property type="resolution" value="1.80 A"/>
    <property type="chains" value="A/B=1-138"/>
</dbReference>
<dbReference type="PDBsum" id="1KT9"/>
<dbReference type="PDBsum" id="1KTG"/>
<dbReference type="SMR" id="Q9U2M7"/>
<dbReference type="BioGRID" id="54272">
    <property type="interactions" value="3"/>
</dbReference>
<dbReference type="DIP" id="DIP-24985N"/>
<dbReference type="FunCoup" id="Q9U2M7">
    <property type="interactions" value="681"/>
</dbReference>
<dbReference type="STRING" id="6239.Y37H9A.6.1"/>
<dbReference type="PaxDb" id="6239-Y37H9A.6"/>
<dbReference type="PeptideAtlas" id="Q9U2M7"/>
<dbReference type="EnsemblMetazoa" id="Y37H9A.6.1">
    <property type="protein sequence ID" value="Y37H9A.6.1"/>
    <property type="gene ID" value="WBGene00003581"/>
</dbReference>
<dbReference type="EnsemblMetazoa" id="Y37H9A.6.2">
    <property type="protein sequence ID" value="Y37H9A.6.2"/>
    <property type="gene ID" value="WBGene00003581"/>
</dbReference>
<dbReference type="GeneID" id="189639"/>
<dbReference type="KEGG" id="cel:CELE_Y37H9A.6"/>
<dbReference type="UCSC" id="Y37H9A.6.2">
    <property type="organism name" value="c. elegans"/>
</dbReference>
<dbReference type="AGR" id="WB:WBGene00003581"/>
<dbReference type="CTD" id="189639"/>
<dbReference type="WormBase" id="Y37H9A.6">
    <property type="protein sequence ID" value="CE20230"/>
    <property type="gene ID" value="WBGene00003581"/>
    <property type="gene designation" value="ndx-4"/>
</dbReference>
<dbReference type="eggNOG" id="KOG2839">
    <property type="taxonomic scope" value="Eukaryota"/>
</dbReference>
<dbReference type="GeneTree" id="ENSGT00390000002416"/>
<dbReference type="HOGENOM" id="CLU_037162_14_5_1"/>
<dbReference type="InParanoid" id="Q9U2M7"/>
<dbReference type="OMA" id="WRDYEQA"/>
<dbReference type="OrthoDB" id="276276at2759"/>
<dbReference type="PhylomeDB" id="Q9U2M7"/>
<dbReference type="BRENDA" id="3.6.1.17">
    <property type="organism ID" value="1045"/>
</dbReference>
<dbReference type="Reactome" id="R-CEL-3299685">
    <property type="pathway name" value="Detoxification of Reactive Oxygen Species"/>
</dbReference>
<dbReference type="SABIO-RK" id="Q9U2M7"/>
<dbReference type="EvolutionaryTrace" id="Q9U2M7"/>
<dbReference type="PRO" id="PR:Q9U2M7"/>
<dbReference type="Proteomes" id="UP000001940">
    <property type="component" value="Chromosome I"/>
</dbReference>
<dbReference type="Bgee" id="WBGene00003581">
    <property type="expression patterns" value="Expressed in pharyngeal muscle cell (C elegans) and 4 other cell types or tissues"/>
</dbReference>
<dbReference type="GO" id="GO:0043135">
    <property type="term" value="F:5-phosphoribosyl 1-pyrophosphate pyrophosphatase activity"/>
    <property type="evidence" value="ECO:0000314"/>
    <property type="project" value="WormBase"/>
</dbReference>
<dbReference type="GO" id="GO:0005524">
    <property type="term" value="F:ATP binding"/>
    <property type="evidence" value="ECO:0007669"/>
    <property type="project" value="UniProtKB-KW"/>
</dbReference>
<dbReference type="GO" id="GO:0004081">
    <property type="term" value="F:bis(5'-nucleosyl)-tetraphosphatase (asymmetrical) activity"/>
    <property type="evidence" value="ECO:0000314"/>
    <property type="project" value="UniProtKB"/>
</dbReference>
<dbReference type="GO" id="GO:0006172">
    <property type="term" value="P:ADP biosynthetic process"/>
    <property type="evidence" value="ECO:0000314"/>
    <property type="project" value="WormBase"/>
</dbReference>
<dbReference type="GO" id="GO:0006167">
    <property type="term" value="P:AMP biosynthetic process"/>
    <property type="evidence" value="ECO:0000314"/>
    <property type="project" value="WormBase"/>
</dbReference>
<dbReference type="GO" id="GO:0006915">
    <property type="term" value="P:apoptotic process"/>
    <property type="evidence" value="ECO:0000304"/>
    <property type="project" value="UniProtKB"/>
</dbReference>
<dbReference type="GO" id="GO:0006754">
    <property type="term" value="P:ATP biosynthetic process"/>
    <property type="evidence" value="ECO:0000314"/>
    <property type="project" value="WormBase"/>
</dbReference>
<dbReference type="GO" id="GO:0015967">
    <property type="term" value="P:diadenosine tetraphosphate catabolic process"/>
    <property type="evidence" value="ECO:0000314"/>
    <property type="project" value="WormBase"/>
</dbReference>
<dbReference type="GO" id="GO:0019693">
    <property type="term" value="P:ribose phosphate metabolic process"/>
    <property type="evidence" value="ECO:0000314"/>
    <property type="project" value="WormBase"/>
</dbReference>
<dbReference type="CDD" id="cd03428">
    <property type="entry name" value="NUDIX_Ap4A_Nudt2"/>
    <property type="match status" value="1"/>
</dbReference>
<dbReference type="FunFam" id="3.90.79.10:FF:000037">
    <property type="entry name" value="Nudix hydrolase 2"/>
    <property type="match status" value="1"/>
</dbReference>
<dbReference type="Gene3D" id="3.90.79.10">
    <property type="entry name" value="Nucleoside Triphosphate Pyrophosphohydrolase"/>
    <property type="match status" value="1"/>
</dbReference>
<dbReference type="InterPro" id="IPR015797">
    <property type="entry name" value="NUDIX_hydrolase-like_dom_sf"/>
</dbReference>
<dbReference type="InterPro" id="IPR020084">
    <property type="entry name" value="NUDIX_hydrolase_CS"/>
</dbReference>
<dbReference type="InterPro" id="IPR000086">
    <property type="entry name" value="NUDIX_hydrolase_dom"/>
</dbReference>
<dbReference type="InterPro" id="IPR051325">
    <property type="entry name" value="Nudix_hydrolase_domain"/>
</dbReference>
<dbReference type="InterPro" id="IPR003565">
    <property type="entry name" value="Tetra_PHTase"/>
</dbReference>
<dbReference type="PANTHER" id="PTHR21340:SF0">
    <property type="entry name" value="BIS(5'-NUCLEOSYL)-TETRAPHOSPHATASE [ASYMMETRICAL]"/>
    <property type="match status" value="1"/>
</dbReference>
<dbReference type="PANTHER" id="PTHR21340">
    <property type="entry name" value="DIADENOSINE 5,5-P1,P4-TETRAPHOSPHATE PYROPHOSPHOHYDROLASE MUTT"/>
    <property type="match status" value="1"/>
</dbReference>
<dbReference type="Pfam" id="PF00293">
    <property type="entry name" value="NUDIX"/>
    <property type="match status" value="1"/>
</dbReference>
<dbReference type="PRINTS" id="PR01405">
    <property type="entry name" value="TETRPHPHTASE"/>
</dbReference>
<dbReference type="SUPFAM" id="SSF55811">
    <property type="entry name" value="Nudix"/>
    <property type="match status" value="1"/>
</dbReference>
<dbReference type="PROSITE" id="PS51462">
    <property type="entry name" value="NUDIX"/>
    <property type="match status" value="1"/>
</dbReference>
<dbReference type="PROSITE" id="PS00893">
    <property type="entry name" value="NUDIX_BOX"/>
    <property type="match status" value="1"/>
</dbReference>